<accession>P38533</accession>
<accession>Q64157</accession>
<accession>Q8VEJ0</accession>
<accession>Q9Z2L8</accession>
<reference key="1">
    <citation type="journal article" date="1991" name="Genes Dev.">
        <title>Cloning and characterization of two mouse heat shock factors with distinct inducible and constitutive DNA-binding ability.</title>
        <authorList>
            <person name="Sarge K.D."/>
            <person name="Zimarino V."/>
            <person name="Holm K."/>
            <person name="Wu C."/>
            <person name="Morimoto R.I."/>
        </authorList>
    </citation>
    <scope>NUCLEOTIDE SEQUENCE [MRNA] (ISOFORM BETA)</scope>
    <source>
        <strain>BALB/cJ</strain>
        <tissue>Liver</tissue>
    </source>
</reference>
<reference key="2">
    <citation type="journal article" date="1999" name="Gene">
        <title>Genomic structure and chromosomal localization of the mouse Hsf2 gene and promoter sequences.</title>
        <authorList>
            <person name="Manuel M."/>
            <person name="Sage J."/>
            <person name="Mattei M.-G."/>
            <person name="Morange M."/>
            <person name="Mezger V."/>
        </authorList>
    </citation>
    <scope>NUCLEOTIDE SEQUENCE [GENOMIC DNA] (ISOFORM ALPHA)</scope>
    <source>
        <strain>129</strain>
    </source>
</reference>
<reference key="3">
    <citation type="journal article" date="1995" name="Mol. Cell. Biol.">
        <title>Tissue-dependent expression of heat shock factor 2 isoforms with distinct transcriptional activities.</title>
        <authorList>
            <person name="Goodson M.L."/>
            <person name="Park-Sarge O.-K."/>
            <person name="Sarge K.D."/>
        </authorList>
    </citation>
    <scope>NUCLEOTIDE SEQUENCE [MRNA] (ISOFORMS ALPHA AND BETA)</scope>
    <scope>TISSUE SPECIFICITY</scope>
    <scope>DEVELOPMENTAL STAGE</scope>
    <source>
        <strain>CBA/J</strain>
    </source>
</reference>
<reference key="4">
    <citation type="journal article" date="2004" name="Genome Res.">
        <title>The status, quality, and expansion of the NIH full-length cDNA project: the Mammalian Gene Collection (MGC).</title>
        <authorList>
            <consortium name="The MGC Project Team"/>
        </authorList>
    </citation>
    <scope>NUCLEOTIDE SEQUENCE [LARGE SCALE MRNA] (ISOFORM BETA)</scope>
</reference>
<evidence type="ECO:0000250" key="1"/>
<evidence type="ECO:0000250" key="2">
    <source>
        <dbReference type="UniProtKB" id="Q03933"/>
    </source>
</evidence>
<evidence type="ECO:0000256" key="3">
    <source>
        <dbReference type="SAM" id="MobiDB-lite"/>
    </source>
</evidence>
<evidence type="ECO:0000269" key="4">
    <source>
    </source>
</evidence>
<evidence type="ECO:0000303" key="5">
    <source>
    </source>
</evidence>
<evidence type="ECO:0000303" key="6">
    <source>
    </source>
</evidence>
<evidence type="ECO:0000303" key="7">
    <source>
    </source>
</evidence>
<evidence type="ECO:0000305" key="8"/>
<protein>
    <recommendedName>
        <fullName>Heat shock factor protein 2</fullName>
        <shortName>HSF 2</shortName>
    </recommendedName>
    <alternativeName>
        <fullName>Heat shock transcription factor 2</fullName>
        <shortName>HSTF 2</shortName>
    </alternativeName>
</protein>
<dbReference type="EMBL" id="X61754">
    <property type="protein sequence ID" value="CAA43893.1"/>
    <property type="molecule type" value="mRNA"/>
</dbReference>
<dbReference type="EMBL" id="AF045627">
    <property type="protein sequence ID" value="AAD02417.1"/>
    <property type="molecule type" value="Genomic_DNA"/>
</dbReference>
<dbReference type="EMBL" id="AF045615">
    <property type="protein sequence ID" value="AAD02417.1"/>
    <property type="status" value="JOINED"/>
    <property type="molecule type" value="Genomic_DNA"/>
</dbReference>
<dbReference type="EMBL" id="AF045616">
    <property type="protein sequence ID" value="AAD02417.1"/>
    <property type="status" value="JOINED"/>
    <property type="molecule type" value="Genomic_DNA"/>
</dbReference>
<dbReference type="EMBL" id="AF045617">
    <property type="protein sequence ID" value="AAD02417.1"/>
    <property type="status" value="JOINED"/>
    <property type="molecule type" value="Genomic_DNA"/>
</dbReference>
<dbReference type="EMBL" id="AF045618">
    <property type="protein sequence ID" value="AAD02417.1"/>
    <property type="status" value="JOINED"/>
    <property type="molecule type" value="Genomic_DNA"/>
</dbReference>
<dbReference type="EMBL" id="AF045619">
    <property type="protein sequence ID" value="AAD02417.1"/>
    <property type="status" value="JOINED"/>
    <property type="molecule type" value="Genomic_DNA"/>
</dbReference>
<dbReference type="EMBL" id="AF045620">
    <property type="protein sequence ID" value="AAD02417.1"/>
    <property type="status" value="JOINED"/>
    <property type="molecule type" value="Genomic_DNA"/>
</dbReference>
<dbReference type="EMBL" id="AF045621">
    <property type="protein sequence ID" value="AAD02417.1"/>
    <property type="status" value="JOINED"/>
    <property type="molecule type" value="Genomic_DNA"/>
</dbReference>
<dbReference type="EMBL" id="AF045622">
    <property type="protein sequence ID" value="AAD02417.1"/>
    <property type="status" value="JOINED"/>
    <property type="molecule type" value="Genomic_DNA"/>
</dbReference>
<dbReference type="EMBL" id="AF045623">
    <property type="protein sequence ID" value="AAD02417.1"/>
    <property type="status" value="JOINED"/>
    <property type="molecule type" value="Genomic_DNA"/>
</dbReference>
<dbReference type="EMBL" id="AF045624">
    <property type="protein sequence ID" value="AAD02417.1"/>
    <property type="status" value="JOINED"/>
    <property type="molecule type" value="Genomic_DNA"/>
</dbReference>
<dbReference type="EMBL" id="AF045625">
    <property type="protein sequence ID" value="AAD02417.1"/>
    <property type="status" value="JOINED"/>
    <property type="molecule type" value="Genomic_DNA"/>
</dbReference>
<dbReference type="EMBL" id="AF045626">
    <property type="protein sequence ID" value="AAD02417.1"/>
    <property type="status" value="JOINED"/>
    <property type="molecule type" value="Genomic_DNA"/>
</dbReference>
<dbReference type="EMBL" id="S79629">
    <property type="protein sequence ID" value="AAB35307.1"/>
    <property type="molecule type" value="mRNA"/>
</dbReference>
<dbReference type="EMBL" id="BC018414">
    <property type="protein sequence ID" value="AAH18414.1"/>
    <property type="molecule type" value="mRNA"/>
</dbReference>
<dbReference type="CCDS" id="CCDS23852.1">
    <molecule id="P38533-2"/>
</dbReference>
<dbReference type="PIR" id="B40583">
    <property type="entry name" value="B40583"/>
</dbReference>
<dbReference type="RefSeq" id="NP_032323.3">
    <molecule id="P38533-2"/>
    <property type="nucleotide sequence ID" value="NM_008297.3"/>
</dbReference>
<dbReference type="PDB" id="7N9J">
    <property type="method" value="X-ray"/>
    <property type="resolution" value="1.74 A"/>
    <property type="chains" value="C=68-76"/>
</dbReference>
<dbReference type="PDB" id="7NA5">
    <property type="method" value="X-ray"/>
    <property type="resolution" value="2.50 A"/>
    <property type="chains" value="C=68-76"/>
</dbReference>
<dbReference type="PDBsum" id="7N9J"/>
<dbReference type="PDBsum" id="7NA5"/>
<dbReference type="SMR" id="P38533"/>
<dbReference type="BioGRID" id="200444">
    <property type="interactions" value="2"/>
</dbReference>
<dbReference type="FunCoup" id="P38533">
    <property type="interactions" value="2695"/>
</dbReference>
<dbReference type="STRING" id="10090.ENSMUSP00000078761"/>
<dbReference type="iPTMnet" id="P38533"/>
<dbReference type="PhosphoSitePlus" id="P38533"/>
<dbReference type="PaxDb" id="10090-ENSMUSP00000078761"/>
<dbReference type="ProteomicsDB" id="273320">
    <molecule id="P38533-1"/>
</dbReference>
<dbReference type="ProteomicsDB" id="273321">
    <molecule id="P38533-2"/>
</dbReference>
<dbReference type="Antibodypedia" id="4231">
    <property type="antibodies" value="689 antibodies from 39 providers"/>
</dbReference>
<dbReference type="DNASU" id="15500"/>
<dbReference type="Ensembl" id="ENSMUST00000079833.6">
    <molecule id="P38533-2"/>
    <property type="protein sequence ID" value="ENSMUSP00000078761.5"/>
    <property type="gene ID" value="ENSMUSG00000019878.9"/>
</dbReference>
<dbReference type="GeneID" id="15500"/>
<dbReference type="KEGG" id="mmu:15500"/>
<dbReference type="UCSC" id="uc007fck.2">
    <molecule id="P38533-2"/>
    <property type="organism name" value="mouse"/>
</dbReference>
<dbReference type="AGR" id="MGI:96239"/>
<dbReference type="CTD" id="3298"/>
<dbReference type="MGI" id="MGI:96239">
    <property type="gene designation" value="Hsf2"/>
</dbReference>
<dbReference type="VEuPathDB" id="HostDB:ENSMUSG00000019878"/>
<dbReference type="eggNOG" id="KOG0627">
    <property type="taxonomic scope" value="Eukaryota"/>
</dbReference>
<dbReference type="GeneTree" id="ENSGT00940000155906"/>
<dbReference type="HOGENOM" id="CLU_038829_1_0_1"/>
<dbReference type="InParanoid" id="P38533"/>
<dbReference type="OMA" id="GKQCGID"/>
<dbReference type="PhylomeDB" id="P38533"/>
<dbReference type="TreeFam" id="TF330401"/>
<dbReference type="BioGRID-ORCS" id="15500">
    <property type="hits" value="2 hits in 82 CRISPR screens"/>
</dbReference>
<dbReference type="ChiTaRS" id="Hsf2">
    <property type="organism name" value="mouse"/>
</dbReference>
<dbReference type="PRO" id="PR:P38533"/>
<dbReference type="Proteomes" id="UP000000589">
    <property type="component" value="Chromosome 10"/>
</dbReference>
<dbReference type="RNAct" id="P38533">
    <property type="molecule type" value="protein"/>
</dbReference>
<dbReference type="Bgee" id="ENSMUSG00000019878">
    <property type="expression patterns" value="Expressed in spermatid and 109 other cell types or tissues"/>
</dbReference>
<dbReference type="ExpressionAtlas" id="P38533">
    <property type="expression patterns" value="baseline and differential"/>
</dbReference>
<dbReference type="GO" id="GO:0005737">
    <property type="term" value="C:cytoplasm"/>
    <property type="evidence" value="ECO:0000314"/>
    <property type="project" value="MGI"/>
</dbReference>
<dbReference type="GO" id="GO:0005654">
    <property type="term" value="C:nucleoplasm"/>
    <property type="evidence" value="ECO:0007669"/>
    <property type="project" value="Ensembl"/>
</dbReference>
<dbReference type="GO" id="GO:0005634">
    <property type="term" value="C:nucleus"/>
    <property type="evidence" value="ECO:0000314"/>
    <property type="project" value="MGI"/>
</dbReference>
<dbReference type="GO" id="GO:0003677">
    <property type="term" value="F:DNA binding"/>
    <property type="evidence" value="ECO:0000314"/>
    <property type="project" value="MGI"/>
</dbReference>
<dbReference type="GO" id="GO:0001228">
    <property type="term" value="F:DNA-binding transcription activator activity, RNA polymerase II-specific"/>
    <property type="evidence" value="ECO:0007669"/>
    <property type="project" value="Ensembl"/>
</dbReference>
<dbReference type="GO" id="GO:0042802">
    <property type="term" value="F:identical protein binding"/>
    <property type="evidence" value="ECO:0000353"/>
    <property type="project" value="MGI"/>
</dbReference>
<dbReference type="GO" id="GO:0000978">
    <property type="term" value="F:RNA polymerase II cis-regulatory region sequence-specific DNA binding"/>
    <property type="evidence" value="ECO:0000314"/>
    <property type="project" value="MGI"/>
</dbReference>
<dbReference type="GO" id="GO:0001162">
    <property type="term" value="F:RNA polymerase II intronic transcription regulatory region sequence-specific DNA binding"/>
    <property type="evidence" value="ECO:0000266"/>
    <property type="project" value="MGI"/>
</dbReference>
<dbReference type="GO" id="GO:0043565">
    <property type="term" value="F:sequence-specific DNA binding"/>
    <property type="evidence" value="ECO:0000314"/>
    <property type="project" value="MGI"/>
</dbReference>
<dbReference type="GO" id="GO:0045944">
    <property type="term" value="P:positive regulation of transcription by RNA polymerase II"/>
    <property type="evidence" value="ECO:0000266"/>
    <property type="project" value="MGI"/>
</dbReference>
<dbReference type="GO" id="GO:0007283">
    <property type="term" value="P:spermatogenesis"/>
    <property type="evidence" value="ECO:0000315"/>
    <property type="project" value="MGI"/>
</dbReference>
<dbReference type="FunFam" id="1.10.10.10:FF:000027">
    <property type="entry name" value="Heat shock transcription factor 1"/>
    <property type="match status" value="1"/>
</dbReference>
<dbReference type="Gene3D" id="1.10.10.10">
    <property type="entry name" value="Winged helix-like DNA-binding domain superfamily/Winged helix DNA-binding domain"/>
    <property type="match status" value="1"/>
</dbReference>
<dbReference type="InterPro" id="IPR000232">
    <property type="entry name" value="HSF_DNA-bd"/>
</dbReference>
<dbReference type="InterPro" id="IPR010542">
    <property type="entry name" value="Vert_HSTF_C"/>
</dbReference>
<dbReference type="InterPro" id="IPR036388">
    <property type="entry name" value="WH-like_DNA-bd_sf"/>
</dbReference>
<dbReference type="InterPro" id="IPR036390">
    <property type="entry name" value="WH_DNA-bd_sf"/>
</dbReference>
<dbReference type="PANTHER" id="PTHR10015:SF185">
    <property type="entry name" value="HEAT SHOCK FACTOR PROTEIN 2"/>
    <property type="match status" value="1"/>
</dbReference>
<dbReference type="PANTHER" id="PTHR10015">
    <property type="entry name" value="HEAT SHOCK TRANSCRIPTION FACTOR"/>
    <property type="match status" value="1"/>
</dbReference>
<dbReference type="Pfam" id="PF00447">
    <property type="entry name" value="HSF_DNA-bind"/>
    <property type="match status" value="1"/>
</dbReference>
<dbReference type="Pfam" id="PF06546">
    <property type="entry name" value="Vert_HS_TF"/>
    <property type="match status" value="1"/>
</dbReference>
<dbReference type="PRINTS" id="PR00056">
    <property type="entry name" value="HSFDOMAIN"/>
</dbReference>
<dbReference type="SMART" id="SM00415">
    <property type="entry name" value="HSF"/>
    <property type="match status" value="1"/>
</dbReference>
<dbReference type="SUPFAM" id="SSF46785">
    <property type="entry name" value="Winged helix' DNA-binding domain"/>
    <property type="match status" value="1"/>
</dbReference>
<dbReference type="PROSITE" id="PS00434">
    <property type="entry name" value="HSF_DOMAIN"/>
    <property type="match status" value="1"/>
</dbReference>
<sequence>MKQSSNVPAFLSKLWTLVEETHTNEFITWSQNGQSFLVLDEQRFAKEILPKYFKHNNMASFVRQLNMYGFRKVVHIESGIIKQERDGPVEFQHPYFKQGQDDLLENIKRKVSSSKPEENKIRQEDLTKIISSAQKVQIKQETIESRLSELKSENESLWKEVSELRAKHAQQQQVIRKIVQFIVTLVQNNQLVSLKRKRPLLLNTNGAPKKNLYQHIVKEPTDNHHHKVPHSRTEGLKSRERISDDIIIYDVTDDNVDEENIPVIPETNEDVVVDSSNQYPDIVIVEDDNEDEYAPVIQSGEQSEPAREPLRVGSAGSSSPLMSSAVQLNGSSSLTSEDPVTMMDSILNDNINLLGKVELLDYLDSIDCSLEDFQAMLSGRQFSIDPDLLVDLFTSSVQMNPTDNIKYTKSENKGLEATKSSVVQHVSEEGRKSKSKPDKQLIQYTAFPLLAFLDGNSASAIEQGSTTASSEVVPSVDKPIEVDELLDSSLDPEPTQSKLVRLEPLTEAEASEATLFYLCELAPAPLDSDMPLLDS</sequence>
<feature type="chain" id="PRO_0000124570" description="Heat shock factor protein 2">
    <location>
        <begin position="1"/>
        <end position="535"/>
    </location>
</feature>
<feature type="DNA-binding region" evidence="1">
    <location>
        <begin position="7"/>
        <end position="112"/>
    </location>
</feature>
<feature type="region of interest" description="Hydrophobic repeat HR-A/B">
    <location>
        <begin position="119"/>
        <end position="192"/>
    </location>
</feature>
<feature type="region of interest" description="Disordered" evidence="3">
    <location>
        <begin position="298"/>
        <end position="325"/>
    </location>
</feature>
<feature type="region of interest" description="Hydrophobic repeat HR-C">
    <location>
        <begin position="359"/>
        <end position="384"/>
    </location>
</feature>
<feature type="region of interest" description="Disordered" evidence="3">
    <location>
        <begin position="418"/>
        <end position="437"/>
    </location>
</feature>
<feature type="compositionally biased region" description="Low complexity" evidence="3">
    <location>
        <begin position="313"/>
        <end position="325"/>
    </location>
</feature>
<feature type="compositionally biased region" description="Basic and acidic residues" evidence="3">
    <location>
        <begin position="426"/>
        <end position="437"/>
    </location>
</feature>
<feature type="cross-link" description="Glycyl lysine isopeptide (Lys-Gly) (interchain with G-Cter in SUMO2)" evidence="2">
    <location>
        <position position="2"/>
    </location>
</feature>
<feature type="cross-link" description="Glycyl lysine isopeptide (Lys-Gly) (interchain with G-Cter in SUMO2)" evidence="2">
    <location>
        <position position="82"/>
    </location>
</feature>
<feature type="cross-link" description="Glycyl lysine isopeptide (Lys-Gly) (interchain with G-Cter in SUMO2)" evidence="2">
    <location>
        <position position="135"/>
    </location>
</feature>
<feature type="cross-link" description="Glycyl lysine isopeptide (Lys-Gly) (interchain with G-Cter in SUMO2)" evidence="2">
    <location>
        <position position="139"/>
    </location>
</feature>
<feature type="cross-link" description="Glycyl lysine isopeptide (Lys-Gly) (interchain with G-Cter in SUMO2)" evidence="2">
    <location>
        <position position="151"/>
    </location>
</feature>
<feature type="cross-link" description="Glycyl lysine isopeptide (Lys-Gly) (interchain with G-Cter in SUMO2)" evidence="2">
    <location>
        <position position="210"/>
    </location>
</feature>
<feature type="cross-link" description="Glycyl lysine isopeptide (Lys-Gly) (interchain with G-Cter in SUMO2)" evidence="2">
    <location>
        <position position="218"/>
    </location>
</feature>
<feature type="cross-link" description="Glycyl lysine isopeptide (Lys-Gly) (interchain with G-Cter in SUMO2)" evidence="2">
    <location>
        <position position="237"/>
    </location>
</feature>
<feature type="splice variant" id="VSP_002417" description="In isoform Beta." evidence="5 6 7">
    <location>
        <begin position="392"/>
        <end position="409"/>
    </location>
</feature>
<comment type="function">
    <text>DNA-binding protein that specifically binds heat shock promoter elements (HSE) and activates transcription. In higher eukaryotes, HSF is unable to bind to the HSE unless the cells are heat shocked. HSF2 is expressed in a form that binds DNA constitutively but loses DNA binding by incubation at greater than 41 degrees C.</text>
</comment>
<comment type="subunit">
    <text evidence="1">DNA-binding homotrimer in stressed or heat shocked cells, otherwise found as a homodimer.</text>
</comment>
<comment type="subcellular location">
    <subcellularLocation>
        <location>Cytoplasm</location>
    </subcellularLocation>
    <subcellularLocation>
        <location>Nucleus</location>
    </subcellularLocation>
    <text>Cytoplasmic during normal growth and moves to the nucleus upon activation.</text>
</comment>
<comment type="alternative products">
    <event type="alternative splicing"/>
    <isoform>
        <id>P38533-1</id>
        <name>Alpha</name>
        <sequence type="displayed"/>
    </isoform>
    <isoform>
        <id>P38533-2</id>
        <name>Beta</name>
        <sequence type="described" ref="VSP_002417"/>
    </isoform>
</comment>
<comment type="tissue specificity">
    <text evidence="4">Isoform alpha is expressed predominantly in testis while isoform beta is expressed predominantly in heart and brain.</text>
</comment>
<comment type="developmental stage">
    <text evidence="4">In the 7-day-old testis, isoform beta is expressed at significantly higher levels than isoform alpha. As development proceeds, the levels of isoform alpha gradually increase so that it is the predominant isoform in mature testes.</text>
</comment>
<comment type="similarity">
    <text evidence="8">Belongs to the HSF family.</text>
</comment>
<organism>
    <name type="scientific">Mus musculus</name>
    <name type="common">Mouse</name>
    <dbReference type="NCBI Taxonomy" id="10090"/>
    <lineage>
        <taxon>Eukaryota</taxon>
        <taxon>Metazoa</taxon>
        <taxon>Chordata</taxon>
        <taxon>Craniata</taxon>
        <taxon>Vertebrata</taxon>
        <taxon>Euteleostomi</taxon>
        <taxon>Mammalia</taxon>
        <taxon>Eutheria</taxon>
        <taxon>Euarchontoglires</taxon>
        <taxon>Glires</taxon>
        <taxon>Rodentia</taxon>
        <taxon>Myomorpha</taxon>
        <taxon>Muroidea</taxon>
        <taxon>Muridae</taxon>
        <taxon>Murinae</taxon>
        <taxon>Mus</taxon>
        <taxon>Mus</taxon>
    </lineage>
</organism>
<proteinExistence type="evidence at protein level"/>
<keyword id="KW-0002">3D-structure</keyword>
<keyword id="KW-0010">Activator</keyword>
<keyword id="KW-0025">Alternative splicing</keyword>
<keyword id="KW-0963">Cytoplasm</keyword>
<keyword id="KW-0238">DNA-binding</keyword>
<keyword id="KW-1017">Isopeptide bond</keyword>
<keyword id="KW-0539">Nucleus</keyword>
<keyword id="KW-1185">Reference proteome</keyword>
<keyword id="KW-0346">Stress response</keyword>
<keyword id="KW-0804">Transcription</keyword>
<keyword id="KW-0805">Transcription regulation</keyword>
<keyword id="KW-0832">Ubl conjugation</keyword>
<name>HSF2_MOUSE</name>
<gene>
    <name type="primary">Hsf2</name>
</gene>